<gene>
    <name evidence="1" type="primary">rlmH</name>
    <name type="ordered locus">Bcen_1687</name>
</gene>
<accession>Q1BUW4</accession>
<dbReference type="EC" id="2.1.1.177" evidence="1"/>
<dbReference type="EMBL" id="CP000378">
    <property type="protein sequence ID" value="ABF76591.1"/>
    <property type="molecule type" value="Genomic_DNA"/>
</dbReference>
<dbReference type="SMR" id="Q1BUW4"/>
<dbReference type="HOGENOM" id="CLU_100552_1_0_4"/>
<dbReference type="GO" id="GO:0005737">
    <property type="term" value="C:cytoplasm"/>
    <property type="evidence" value="ECO:0007669"/>
    <property type="project" value="UniProtKB-SubCell"/>
</dbReference>
<dbReference type="GO" id="GO:0070038">
    <property type="term" value="F:rRNA (pseudouridine-N3-)-methyltransferase activity"/>
    <property type="evidence" value="ECO:0007669"/>
    <property type="project" value="UniProtKB-UniRule"/>
</dbReference>
<dbReference type="CDD" id="cd18081">
    <property type="entry name" value="RlmH-like"/>
    <property type="match status" value="1"/>
</dbReference>
<dbReference type="Gene3D" id="3.40.1280.10">
    <property type="match status" value="1"/>
</dbReference>
<dbReference type="HAMAP" id="MF_00658">
    <property type="entry name" value="23SrRNA_methyltr_H"/>
    <property type="match status" value="1"/>
</dbReference>
<dbReference type="InterPro" id="IPR029028">
    <property type="entry name" value="Alpha/beta_knot_MTases"/>
</dbReference>
<dbReference type="InterPro" id="IPR003742">
    <property type="entry name" value="RlmH-like"/>
</dbReference>
<dbReference type="InterPro" id="IPR029026">
    <property type="entry name" value="tRNA_m1G_MTases_N"/>
</dbReference>
<dbReference type="NCBIfam" id="NF000986">
    <property type="entry name" value="PRK00103.1-4"/>
    <property type="match status" value="1"/>
</dbReference>
<dbReference type="NCBIfam" id="TIGR00246">
    <property type="entry name" value="tRNA_RlmH_YbeA"/>
    <property type="match status" value="1"/>
</dbReference>
<dbReference type="PANTHER" id="PTHR33603">
    <property type="entry name" value="METHYLTRANSFERASE"/>
    <property type="match status" value="1"/>
</dbReference>
<dbReference type="PANTHER" id="PTHR33603:SF1">
    <property type="entry name" value="RIBOSOMAL RNA LARGE SUBUNIT METHYLTRANSFERASE H"/>
    <property type="match status" value="1"/>
</dbReference>
<dbReference type="Pfam" id="PF02590">
    <property type="entry name" value="SPOUT_MTase"/>
    <property type="match status" value="1"/>
</dbReference>
<dbReference type="PIRSF" id="PIRSF004505">
    <property type="entry name" value="MT_bac"/>
    <property type="match status" value="1"/>
</dbReference>
<dbReference type="SUPFAM" id="SSF75217">
    <property type="entry name" value="alpha/beta knot"/>
    <property type="match status" value="1"/>
</dbReference>
<proteinExistence type="inferred from homology"/>
<organism>
    <name type="scientific">Burkholderia orbicola (strain AU 1054)</name>
    <dbReference type="NCBI Taxonomy" id="331271"/>
    <lineage>
        <taxon>Bacteria</taxon>
        <taxon>Pseudomonadati</taxon>
        <taxon>Pseudomonadota</taxon>
        <taxon>Betaproteobacteria</taxon>
        <taxon>Burkholderiales</taxon>
        <taxon>Burkholderiaceae</taxon>
        <taxon>Burkholderia</taxon>
        <taxon>Burkholderia cepacia complex</taxon>
        <taxon>Burkholderia orbicola</taxon>
    </lineage>
</organism>
<keyword id="KW-0963">Cytoplasm</keyword>
<keyword id="KW-0489">Methyltransferase</keyword>
<keyword id="KW-0698">rRNA processing</keyword>
<keyword id="KW-0949">S-adenosyl-L-methionine</keyword>
<keyword id="KW-0808">Transferase</keyword>
<name>RLMH_BURO1</name>
<feature type="chain" id="PRO_0000260538" description="Ribosomal RNA large subunit methyltransferase H">
    <location>
        <begin position="1"/>
        <end position="156"/>
    </location>
</feature>
<feature type="binding site" evidence="1">
    <location>
        <position position="73"/>
    </location>
    <ligand>
        <name>S-adenosyl-L-methionine</name>
        <dbReference type="ChEBI" id="CHEBI:59789"/>
    </ligand>
</feature>
<feature type="binding site" evidence="1">
    <location>
        <position position="104"/>
    </location>
    <ligand>
        <name>S-adenosyl-L-methionine</name>
        <dbReference type="ChEBI" id="CHEBI:59789"/>
    </ligand>
</feature>
<feature type="binding site" evidence="1">
    <location>
        <begin position="123"/>
        <end position="128"/>
    </location>
    <ligand>
        <name>S-adenosyl-L-methionine</name>
        <dbReference type="ChEBI" id="CHEBI:59789"/>
    </ligand>
</feature>
<protein>
    <recommendedName>
        <fullName evidence="1">Ribosomal RNA large subunit methyltransferase H</fullName>
        <ecNumber evidence="1">2.1.1.177</ecNumber>
    </recommendedName>
    <alternativeName>
        <fullName evidence="1">23S rRNA (pseudouridine1915-N3)-methyltransferase</fullName>
    </alternativeName>
    <alternativeName>
        <fullName evidence="1">23S rRNA m3Psi1915 methyltransferase</fullName>
    </alternativeName>
    <alternativeName>
        <fullName evidence="1">rRNA (pseudouridine-N3-)-methyltransferase RlmH</fullName>
    </alternativeName>
</protein>
<sequence>MKLFILAVGHKMPGWIASGFDEYTKRMPPELRIELREIKPELRSGGRSAESVMAAERQKIEAALPKGARLVALDERGRDWTTMQLAQALPGWQQDGRDVAFVIGGADGLDPDLKARADVLLRISSMTLPHGMVRVLLAEQLYRAWSITQNHPYHRA</sequence>
<comment type="function">
    <text evidence="1">Specifically methylates the pseudouridine at position 1915 (m3Psi1915) in 23S rRNA.</text>
</comment>
<comment type="catalytic activity">
    <reaction evidence="1">
        <text>pseudouridine(1915) in 23S rRNA + S-adenosyl-L-methionine = N(3)-methylpseudouridine(1915) in 23S rRNA + S-adenosyl-L-homocysteine + H(+)</text>
        <dbReference type="Rhea" id="RHEA:42752"/>
        <dbReference type="Rhea" id="RHEA-COMP:10221"/>
        <dbReference type="Rhea" id="RHEA-COMP:10222"/>
        <dbReference type="ChEBI" id="CHEBI:15378"/>
        <dbReference type="ChEBI" id="CHEBI:57856"/>
        <dbReference type="ChEBI" id="CHEBI:59789"/>
        <dbReference type="ChEBI" id="CHEBI:65314"/>
        <dbReference type="ChEBI" id="CHEBI:74486"/>
        <dbReference type="EC" id="2.1.1.177"/>
    </reaction>
</comment>
<comment type="subunit">
    <text evidence="1">Homodimer.</text>
</comment>
<comment type="subcellular location">
    <subcellularLocation>
        <location evidence="1">Cytoplasm</location>
    </subcellularLocation>
</comment>
<comment type="similarity">
    <text evidence="1">Belongs to the RNA methyltransferase RlmH family.</text>
</comment>
<reference key="1">
    <citation type="submission" date="2006-05" db="EMBL/GenBank/DDBJ databases">
        <title>Complete sequence of chromosome 1 of Burkholderia cenocepacia AU 1054.</title>
        <authorList>
            <consortium name="US DOE Joint Genome Institute"/>
            <person name="Copeland A."/>
            <person name="Lucas S."/>
            <person name="Lapidus A."/>
            <person name="Barry K."/>
            <person name="Detter J.C."/>
            <person name="Glavina del Rio T."/>
            <person name="Hammon N."/>
            <person name="Israni S."/>
            <person name="Dalin E."/>
            <person name="Tice H."/>
            <person name="Pitluck S."/>
            <person name="Chain P."/>
            <person name="Malfatti S."/>
            <person name="Shin M."/>
            <person name="Vergez L."/>
            <person name="Schmutz J."/>
            <person name="Larimer F."/>
            <person name="Land M."/>
            <person name="Hauser L."/>
            <person name="Kyrpides N."/>
            <person name="Lykidis A."/>
            <person name="LiPuma J.J."/>
            <person name="Konstantinidis K."/>
            <person name="Tiedje J.M."/>
            <person name="Richardson P."/>
        </authorList>
    </citation>
    <scope>NUCLEOTIDE SEQUENCE [LARGE SCALE GENOMIC DNA]</scope>
    <source>
        <strain>AU 1054</strain>
    </source>
</reference>
<evidence type="ECO:0000255" key="1">
    <source>
        <dbReference type="HAMAP-Rule" id="MF_00658"/>
    </source>
</evidence>